<evidence type="ECO:0000255" key="1"/>
<evidence type="ECO:0000269" key="2">
    <source>
    </source>
</evidence>
<evidence type="ECO:0000269" key="3">
    <source>
    </source>
</evidence>
<evidence type="ECO:0000269" key="4">
    <source>
    </source>
</evidence>
<evidence type="ECO:0000269" key="5">
    <source>
    </source>
</evidence>
<evidence type="ECO:0000269" key="6">
    <source>
    </source>
</evidence>
<evidence type="ECO:0000269" key="7">
    <source>
    </source>
</evidence>
<evidence type="ECO:0000269" key="8">
    <source>
    </source>
</evidence>
<evidence type="ECO:0000269" key="9">
    <source>
    </source>
</evidence>
<evidence type="ECO:0000269" key="10">
    <source>
    </source>
</evidence>
<evidence type="ECO:0000269" key="11">
    <source ref="4"/>
</evidence>
<evidence type="ECO:0000269" key="12">
    <source ref="8"/>
</evidence>
<evidence type="ECO:0000303" key="13">
    <source>
    </source>
</evidence>
<evidence type="ECO:0000303" key="14">
    <source>
    </source>
</evidence>
<evidence type="ECO:0000303" key="15">
    <source>
    </source>
</evidence>
<evidence type="ECO:0000303" key="16">
    <source>
    </source>
</evidence>
<evidence type="ECO:0000305" key="17"/>
<evidence type="ECO:0000305" key="18">
    <source>
    </source>
</evidence>
<evidence type="ECO:0000305" key="19">
    <source>
    </source>
</evidence>
<evidence type="ECO:0000312" key="20">
    <source>
        <dbReference type="HGNC" id="HGNC:9326"/>
    </source>
</evidence>
<evidence type="ECO:0007744" key="21">
    <source>
        <dbReference type="PDB" id="1PJA"/>
    </source>
</evidence>
<evidence type="ECO:0007829" key="22">
    <source>
        <dbReference type="PDB" id="1PJA"/>
    </source>
</evidence>
<sequence length="302" mass="34225">MLGLCGQRLPAAWVLLLLPFLPLLLLAAPAPHRASYKPVIVVHGLFDSSYSFRHLLEYINETHPGTVVTVLDLFDGRESLRPLWEQVQGFREAVVPIMAKAPQGVHLICYSQGGLVCRALLSVMDDHNVDSFISLSSPQMGQYGDTDYLKWLFPTSMRSNLYRICYSPWGQEFSICNYWHDPHHDDLYLNASSFLALINGERDHPNATVWRKNFLRVGHLVLIGGPDDGVITPWQSSFFGFYDANETVLEMEEQLVYLRDSFGLKTLLARGAIVRCPMAGISHTAWHSNRTLYETCIEPWLS</sequence>
<keyword id="KW-0002">3D-structure</keyword>
<keyword id="KW-0025">Alternative splicing</keyword>
<keyword id="KW-1015">Disulfide bond</keyword>
<keyword id="KW-0325">Glycoprotein</keyword>
<keyword id="KW-0378">Hydrolase</keyword>
<keyword id="KW-0458">Lysosome</keyword>
<keyword id="KW-1267">Proteomics identification</keyword>
<keyword id="KW-1185">Reference proteome</keyword>
<keyword id="KW-0732">Signal</keyword>
<comment type="function">
    <text evidence="3 5 10">Catalyzes the cleavage of thioester bonds from S-palmitoyl-CoA or S-palmitoyl-N-acetylcysteamine (unbranched structures) but does not have activity against palmitoylcysteine or palmitoylated proteins, branched structures or bulky head groups. Conversely, hydrolyzes both long and short chain fatty acyl-CoA substrate.</text>
</comment>
<comment type="function">
    <molecule>Isoform 2</molecule>
    <text evidence="5">Catalytically inactive due to lack of active site His-283.</text>
</comment>
<comment type="catalytic activity">
    <reaction evidence="3 5 10">
        <text>hexadecanoyl-CoA + H2O = hexadecanoate + CoA + H(+)</text>
        <dbReference type="Rhea" id="RHEA:16645"/>
        <dbReference type="ChEBI" id="CHEBI:7896"/>
        <dbReference type="ChEBI" id="CHEBI:15377"/>
        <dbReference type="ChEBI" id="CHEBI:15378"/>
        <dbReference type="ChEBI" id="CHEBI:57287"/>
        <dbReference type="ChEBI" id="CHEBI:57379"/>
        <dbReference type="EC" id="3.1.2.2"/>
    </reaction>
    <physiologicalReaction direction="left-to-right" evidence="18">
        <dbReference type="Rhea" id="RHEA:16646"/>
    </physiologicalReaction>
</comment>
<comment type="catalytic activity">
    <reaction evidence="5">
        <text>S-hexadecanoyl-N-acetylcysteamine + H2O = N-acetylcysteamine + hexadecanoate + H(+)</text>
        <dbReference type="Rhea" id="RHEA:84099"/>
        <dbReference type="ChEBI" id="CHEBI:7896"/>
        <dbReference type="ChEBI" id="CHEBI:15377"/>
        <dbReference type="ChEBI" id="CHEBI:15378"/>
        <dbReference type="ChEBI" id="CHEBI:74410"/>
        <dbReference type="ChEBI" id="CHEBI:233601"/>
    </reaction>
</comment>
<comment type="biophysicochemical properties">
    <kinetics>
        <KM evidence="5">67 uM for S-palmitoyl-CoA</KM>
        <KM evidence="5">37 uM for S-palmitoyl-N-acetylcysteamine</KM>
        <KM evidence="5">117 uM for 4-methylumbelliferyl-6-S-palmitoyl-beta-D-glucopyranoside</KM>
        <Vmax evidence="5">1.7 umol/min/mg enzyme toward S-palmitoyl-CoA</Vmax>
        <Vmax evidence="5">3.3 umol/min/mg enzyme toward S-palmitoyl-N-acetylcysteamine</Vmax>
        <Vmax evidence="5">0.43 umol/min/mg enzyme toward 4-methylumbelliferyl-6-S-palmitoyl-beta-D-glucopyranoside</Vmax>
    </kinetics>
    <phDependence>
        <text evidence="10">Optimum pH is 7.0.</text>
    </phDependence>
</comment>
<comment type="subcellular location">
    <subcellularLocation>
        <location evidence="10">Lysosome</location>
    </subcellularLocation>
</comment>
<comment type="alternative products">
    <event type="alternative splicing"/>
    <isoform>
        <id>Q9UMR5-1</id>
        <name>1</name>
        <sequence type="displayed"/>
    </isoform>
    <isoform>
        <id>Q9UMR5-2</id>
        <name>2</name>
        <name>I</name>
        <sequence type="described" ref="VSP_005188"/>
    </isoform>
    <isoform>
        <id>Q9UMR5-3</id>
        <name>3</name>
        <sequence type="described" ref="VSP_054027"/>
    </isoform>
</comment>
<comment type="tissue specificity">
    <text evidence="10">Broadly expressed, with highest levels in skeletal muscle.</text>
</comment>
<comment type="similarity">
    <text evidence="17">Belongs to the palmitoyl-protein thioesterase family.</text>
</comment>
<comment type="sequence caution" evidence="17">
    <conflict type="erroneous initiation">
        <sequence resource="EMBL-CDS" id="CAG38577"/>
    </conflict>
    <text>Extended N-terminus.</text>
</comment>
<accession>Q9UMR5</accession>
<accession>A2ABC9</accession>
<accession>A2ABD1</accession>
<accession>A2ARM7</accession>
<accession>A2BFH7</accession>
<accession>A2BFH9</accession>
<accession>A2BFI2</accession>
<accession>A8K9L4</accession>
<accession>B0S868</accession>
<accession>G8JLE1</accession>
<accession>O14799</accession>
<accession>Q0P6K0</accession>
<accession>Q5JP13</accession>
<accession>Q5JP14</accession>
<accession>Q5JQF0</accession>
<accession>Q5SSX4</accession>
<accession>Q5SSX5</accession>
<accession>Q5SSX6</accession>
<accession>Q5STJ4</accession>
<accession>Q5STJ5</accession>
<accession>Q5STJ6</accession>
<accession>Q6FI80</accession>
<accession>Q99945</accession>
<organism>
    <name type="scientific">Homo sapiens</name>
    <name type="common">Human</name>
    <dbReference type="NCBI Taxonomy" id="9606"/>
    <lineage>
        <taxon>Eukaryota</taxon>
        <taxon>Metazoa</taxon>
        <taxon>Chordata</taxon>
        <taxon>Craniata</taxon>
        <taxon>Vertebrata</taxon>
        <taxon>Euteleostomi</taxon>
        <taxon>Mammalia</taxon>
        <taxon>Eutheria</taxon>
        <taxon>Euarchontoglires</taxon>
        <taxon>Primates</taxon>
        <taxon>Haplorrhini</taxon>
        <taxon>Catarrhini</taxon>
        <taxon>Hominidae</taxon>
        <taxon>Homo</taxon>
    </lineage>
</organism>
<gene>
    <name evidence="20" type="primary">PPT2</name>
</gene>
<protein>
    <recommendedName>
        <fullName>Lysosomal thioesterase PPT2</fullName>
        <shortName>PPT-2</shortName>
        <ecNumber evidence="5 10">3.1.2.2</ecNumber>
    </recommendedName>
    <alternativeName>
        <fullName evidence="16">Palmitoyl-protein thioesterase 2</fullName>
    </alternativeName>
    <alternativeName>
        <fullName evidence="13">S-thioesterase G14</fullName>
    </alternativeName>
</protein>
<dbReference type="EC" id="3.1.2.2" evidence="5 10"/>
<dbReference type="EMBL" id="AF020543">
    <property type="protein sequence ID" value="AAB80730.1"/>
    <property type="molecule type" value="mRNA"/>
</dbReference>
<dbReference type="EMBL" id="AF020544">
    <property type="protein sequence ID" value="AAB80731.1"/>
    <property type="molecule type" value="mRNA"/>
</dbReference>
<dbReference type="EMBL" id="Y17958">
    <property type="protein sequence ID" value="CAB46981.1"/>
    <property type="molecule type" value="mRNA"/>
</dbReference>
<dbReference type="EMBL" id="AL110128">
    <property type="protein sequence ID" value="CAB53659.1"/>
    <property type="molecule type" value="mRNA"/>
</dbReference>
<dbReference type="EMBL" id="CR533546">
    <property type="protein sequence ID" value="CAG38577.1"/>
    <property type="status" value="ALT_INIT"/>
    <property type="molecule type" value="mRNA"/>
</dbReference>
<dbReference type="EMBL" id="AK292729">
    <property type="protein sequence ID" value="BAF85418.1"/>
    <property type="molecule type" value="mRNA"/>
</dbReference>
<dbReference type="EMBL" id="U89336">
    <property type="protein sequence ID" value="AAB47495.1"/>
    <property type="molecule type" value="Genomic_DNA"/>
</dbReference>
<dbReference type="EMBL" id="AL662828">
    <property type="status" value="NOT_ANNOTATED_CDS"/>
    <property type="molecule type" value="Genomic_DNA"/>
</dbReference>
<dbReference type="EMBL" id="AL662884">
    <property type="status" value="NOT_ANNOTATED_CDS"/>
    <property type="molecule type" value="Genomic_DNA"/>
</dbReference>
<dbReference type="EMBL" id="AL845464">
    <property type="status" value="NOT_ANNOTATED_CDS"/>
    <property type="molecule type" value="Genomic_DNA"/>
</dbReference>
<dbReference type="EMBL" id="BX284686">
    <property type="status" value="NOT_ANNOTATED_CDS"/>
    <property type="molecule type" value="Genomic_DNA"/>
</dbReference>
<dbReference type="EMBL" id="BX927239">
    <property type="status" value="NOT_ANNOTATED_CDS"/>
    <property type="molecule type" value="Genomic_DNA"/>
</dbReference>
<dbReference type="EMBL" id="CR753803">
    <property type="status" value="NOT_ANNOTATED_CDS"/>
    <property type="molecule type" value="Genomic_DNA"/>
</dbReference>
<dbReference type="EMBL" id="CR812478">
    <property type="status" value="NOT_ANNOTATED_CDS"/>
    <property type="molecule type" value="Genomic_DNA"/>
</dbReference>
<dbReference type="EMBL" id="CR933878">
    <property type="status" value="NOT_ANNOTATED_CDS"/>
    <property type="molecule type" value="Genomic_DNA"/>
</dbReference>
<dbReference type="EMBL" id="CH471081">
    <property type="protein sequence ID" value="EAX03597.1"/>
    <property type="molecule type" value="Genomic_DNA"/>
</dbReference>
<dbReference type="EMBL" id="CH471081">
    <property type="protein sequence ID" value="EAX03591.1"/>
    <property type="molecule type" value="Genomic_DNA"/>
</dbReference>
<dbReference type="EMBL" id="BC001355">
    <property type="protein sequence ID" value="AAH01355.1"/>
    <property type="molecule type" value="mRNA"/>
</dbReference>
<dbReference type="CCDS" id="CCDS4740.1">
    <molecule id="Q9UMR5-3"/>
</dbReference>
<dbReference type="CCDS" id="CCDS4742.1">
    <molecule id="Q9UMR5-1"/>
</dbReference>
<dbReference type="RefSeq" id="NP_001191032.1">
    <molecule id="Q9UMR5-1"/>
    <property type="nucleotide sequence ID" value="NM_001204103.2"/>
</dbReference>
<dbReference type="RefSeq" id="NP_005146.4">
    <molecule id="Q9UMR5-1"/>
    <property type="nucleotide sequence ID" value="NM_005155.6"/>
</dbReference>
<dbReference type="RefSeq" id="NP_619731.2">
    <molecule id="Q9UMR5-3"/>
    <property type="nucleotide sequence ID" value="NM_138717.3"/>
</dbReference>
<dbReference type="PDB" id="1PJA">
    <property type="method" value="X-ray"/>
    <property type="resolution" value="2.70 A"/>
    <property type="chains" value="A=1-302"/>
</dbReference>
<dbReference type="PDBsum" id="1PJA"/>
<dbReference type="SMR" id="Q9UMR5"/>
<dbReference type="BioGRID" id="114775">
    <property type="interactions" value="51"/>
</dbReference>
<dbReference type="FunCoup" id="Q9UMR5">
    <property type="interactions" value="1107"/>
</dbReference>
<dbReference type="IntAct" id="Q9UMR5">
    <property type="interactions" value="18"/>
</dbReference>
<dbReference type="STRING" id="9606.ENSP00000354608"/>
<dbReference type="ChEMBL" id="CHEMBL2189137"/>
<dbReference type="ESTHER" id="human-PPT2">
    <property type="family name" value="Palmitoyl-protein_thioesterase"/>
</dbReference>
<dbReference type="GlyCosmos" id="Q9UMR5">
    <property type="glycosylation" value="5 sites, No reported glycans"/>
</dbReference>
<dbReference type="GlyGen" id="Q9UMR5">
    <property type="glycosylation" value="6 sites, 7 N-linked glycans (3 sites), 1 O-linked glycan (1 site)"/>
</dbReference>
<dbReference type="iPTMnet" id="Q9UMR5"/>
<dbReference type="PhosphoSitePlus" id="Q9UMR5"/>
<dbReference type="BioMuta" id="PPT2"/>
<dbReference type="DMDM" id="296453016"/>
<dbReference type="jPOST" id="Q9UMR5"/>
<dbReference type="MassIVE" id="Q9UMR5"/>
<dbReference type="PaxDb" id="9606-ENSP00000354608"/>
<dbReference type="PeptideAtlas" id="Q9UMR5"/>
<dbReference type="ProteomicsDB" id="34200"/>
<dbReference type="ProteomicsDB" id="85198">
    <molecule id="Q9UMR5-1"/>
</dbReference>
<dbReference type="ProteomicsDB" id="85199">
    <molecule id="Q9UMR5-2"/>
</dbReference>
<dbReference type="Pumba" id="Q9UMR5"/>
<dbReference type="Antibodypedia" id="45479">
    <property type="antibodies" value="133 antibodies from 21 providers"/>
</dbReference>
<dbReference type="DNASU" id="9374"/>
<dbReference type="Ensembl" id="ENST00000324816.11">
    <molecule id="Q9UMR5-1"/>
    <property type="protein sequence ID" value="ENSP00000320528.6"/>
    <property type="gene ID" value="ENSG00000221988.13"/>
</dbReference>
<dbReference type="Ensembl" id="ENST00000361568.6">
    <molecule id="Q9UMR5-3"/>
    <property type="protein sequence ID" value="ENSP00000354608.2"/>
    <property type="gene ID" value="ENSG00000221988.13"/>
</dbReference>
<dbReference type="Ensembl" id="ENST00000375137.6">
    <molecule id="Q9UMR5-1"/>
    <property type="protein sequence ID" value="ENSP00000364279.2"/>
    <property type="gene ID" value="ENSG00000221988.13"/>
</dbReference>
<dbReference type="Ensembl" id="ENST00000375143.6">
    <molecule id="Q9UMR5-1"/>
    <property type="protein sequence ID" value="ENSP00000364285.2"/>
    <property type="gene ID" value="ENSG00000221988.13"/>
</dbReference>
<dbReference type="Ensembl" id="ENST00000383301.6">
    <property type="protein sequence ID" value="ENSP00000372789.2"/>
    <property type="gene ID" value="ENSG00000206329.15"/>
</dbReference>
<dbReference type="Ensembl" id="ENST00000395523.5">
    <molecule id="Q9UMR5-1"/>
    <property type="protein sequence ID" value="ENSP00000378894.1"/>
    <property type="gene ID" value="ENSG00000221988.13"/>
</dbReference>
<dbReference type="Ensembl" id="ENST00000412651.6">
    <property type="protein sequence ID" value="ENSP00000416505.2"/>
    <property type="gene ID" value="ENSG00000236649.10"/>
</dbReference>
<dbReference type="Ensembl" id="ENST00000414356.6">
    <property type="protein sequence ID" value="ENSP00000398462.2"/>
    <property type="gene ID" value="ENSG00000168452.21"/>
</dbReference>
<dbReference type="Ensembl" id="ENST00000415972.1">
    <property type="protein sequence ID" value="ENSP00000408333.1"/>
    <property type="gene ID" value="ENSG00000228116.9"/>
</dbReference>
<dbReference type="Ensembl" id="ENST00000423347.6">
    <property type="protein sequence ID" value="ENSP00000406219.2"/>
    <property type="gene ID" value="ENSG00000231618.10"/>
</dbReference>
<dbReference type="Ensembl" id="ENST00000433748.5">
    <property type="protein sequence ID" value="ENSP00000410001.1"/>
    <property type="gene ID" value="ENSG00000206256.14"/>
</dbReference>
<dbReference type="Ensembl" id="ENST00000476214.5">
    <property type="protein sequence ID" value="ENSP00000432308.1"/>
    <property type="gene ID" value="ENSG00000168452.21"/>
</dbReference>
<dbReference type="Ensembl" id="ENST00000480383.5">
    <property type="protein sequence ID" value="ENSP00000432502.1"/>
    <property type="gene ID" value="ENSG00000236649.10"/>
</dbReference>
<dbReference type="Ensembl" id="ENST00000483565.5">
    <property type="protein sequence ID" value="ENSP00000431928.1"/>
    <property type="gene ID" value="ENSG00000231618.10"/>
</dbReference>
<dbReference type="Ensembl" id="ENST00000488579.5">
    <property type="protein sequence ID" value="ENSP00000434992.1"/>
    <property type="gene ID" value="ENSG00000236649.10"/>
</dbReference>
<dbReference type="Ensembl" id="ENST00000490624.5">
    <property type="protein sequence ID" value="ENSP00000433323.1"/>
    <property type="gene ID" value="ENSG00000168452.21"/>
</dbReference>
<dbReference type="Ensembl" id="ENST00000493809.5">
    <property type="protein sequence ID" value="ENSP00000436963.1"/>
    <property type="gene ID" value="ENSG00000227600.11"/>
</dbReference>
<dbReference type="Ensembl" id="ENST00000496937.5">
    <property type="protein sequence ID" value="ENSP00000432964.1"/>
    <property type="gene ID" value="ENSG00000231618.10"/>
</dbReference>
<dbReference type="Ensembl" id="ENST00000527704.5">
    <property type="protein sequence ID" value="ENSP00000433061.1"/>
    <property type="gene ID" value="ENSG00000227600.11"/>
</dbReference>
<dbReference type="GeneID" id="9374"/>
<dbReference type="KEGG" id="hsa:9374"/>
<dbReference type="MANE-Select" id="ENST00000324816.11">
    <property type="protein sequence ID" value="ENSP00000320528.6"/>
    <property type="RefSeq nucleotide sequence ID" value="NM_005155.7"/>
    <property type="RefSeq protein sequence ID" value="NP_005146.4"/>
</dbReference>
<dbReference type="UCSC" id="uc003nzw.4">
    <molecule id="Q9UMR5-1"/>
    <property type="organism name" value="human"/>
</dbReference>
<dbReference type="AGR" id="HGNC:9326"/>
<dbReference type="CTD" id="9374"/>
<dbReference type="DisGeNET" id="9374"/>
<dbReference type="GeneCards" id="PPT2"/>
<dbReference type="HGNC" id="HGNC:9326">
    <property type="gene designation" value="PPT2"/>
</dbReference>
<dbReference type="HPA" id="ENSG00000221988">
    <property type="expression patterns" value="Low tissue specificity"/>
</dbReference>
<dbReference type="MalaCards" id="PPT2"/>
<dbReference type="MIM" id="603298">
    <property type="type" value="gene"/>
</dbReference>
<dbReference type="neXtProt" id="NX_Q9UMR5"/>
<dbReference type="OpenTargets" id="ENSG00000221988"/>
<dbReference type="OpenTargets" id="ENSG00000258388"/>
<dbReference type="PharmGKB" id="PA33689"/>
<dbReference type="VEuPathDB" id="HostDB:ENSG00000221988"/>
<dbReference type="eggNOG" id="KOG2541">
    <property type="taxonomic scope" value="Eukaryota"/>
</dbReference>
<dbReference type="GeneTree" id="ENSGT00940000155779"/>
<dbReference type="HOGENOM" id="CLU_050129_1_0_1"/>
<dbReference type="InParanoid" id="Q9UMR5"/>
<dbReference type="OMA" id="HHSDLYL"/>
<dbReference type="OrthoDB" id="155976at2759"/>
<dbReference type="PAN-GO" id="Q9UMR5">
    <property type="GO annotations" value="2 GO annotations based on evolutionary models"/>
</dbReference>
<dbReference type="PhylomeDB" id="Q9UMR5"/>
<dbReference type="TreeFam" id="TF323926"/>
<dbReference type="PathwayCommons" id="Q9UMR5"/>
<dbReference type="Reactome" id="R-HSA-75105">
    <property type="pathway name" value="Fatty acyl-CoA biosynthesis"/>
</dbReference>
<dbReference type="SignaLink" id="Q9UMR5"/>
<dbReference type="BioGRID-ORCS" id="9374">
    <property type="hits" value="21 hits in 1158 CRISPR screens"/>
</dbReference>
<dbReference type="EvolutionaryTrace" id="Q9UMR5"/>
<dbReference type="GeneWiki" id="PPT2"/>
<dbReference type="GenomeRNAi" id="9374"/>
<dbReference type="Pharos" id="Q9UMR5">
    <property type="development level" value="Tbio"/>
</dbReference>
<dbReference type="PRO" id="PR:Q9UMR5"/>
<dbReference type="Proteomes" id="UP000005640">
    <property type="component" value="Chromosome 6"/>
</dbReference>
<dbReference type="RNAct" id="Q9UMR5">
    <property type="molecule type" value="protein"/>
</dbReference>
<dbReference type="Bgee" id="ENSG00000221988">
    <property type="expression patterns" value="Expressed in left ovary and 95 other cell types or tissues"/>
</dbReference>
<dbReference type="ExpressionAtlas" id="Q9UMR5">
    <property type="expression patterns" value="baseline and differential"/>
</dbReference>
<dbReference type="GO" id="GO:0070062">
    <property type="term" value="C:extracellular exosome"/>
    <property type="evidence" value="ECO:0007005"/>
    <property type="project" value="UniProtKB"/>
</dbReference>
<dbReference type="GO" id="GO:0005576">
    <property type="term" value="C:extracellular region"/>
    <property type="evidence" value="ECO:0000318"/>
    <property type="project" value="GO_Central"/>
</dbReference>
<dbReference type="GO" id="GO:0043231">
    <property type="term" value="C:intracellular membrane-bounded organelle"/>
    <property type="evidence" value="ECO:0000314"/>
    <property type="project" value="HPA"/>
</dbReference>
<dbReference type="GO" id="GO:0043202">
    <property type="term" value="C:lysosomal lumen"/>
    <property type="evidence" value="ECO:0000304"/>
    <property type="project" value="Reactome"/>
</dbReference>
<dbReference type="GO" id="GO:0005764">
    <property type="term" value="C:lysosome"/>
    <property type="evidence" value="ECO:0000318"/>
    <property type="project" value="GO_Central"/>
</dbReference>
<dbReference type="GO" id="GO:0047617">
    <property type="term" value="F:fatty acyl-CoA hydrolase activity"/>
    <property type="evidence" value="ECO:0000314"/>
    <property type="project" value="UniProtKB"/>
</dbReference>
<dbReference type="GO" id="GO:0098599">
    <property type="term" value="F:palmitoyl hydrolase activity"/>
    <property type="evidence" value="ECO:0000314"/>
    <property type="project" value="UniProtKB"/>
</dbReference>
<dbReference type="GO" id="GO:0008474">
    <property type="term" value="F:palmitoyl-(protein) hydrolase activity"/>
    <property type="evidence" value="ECO:0000318"/>
    <property type="project" value="GO_Central"/>
</dbReference>
<dbReference type="GO" id="GO:0016790">
    <property type="term" value="F:thiolester hydrolase activity"/>
    <property type="evidence" value="ECO:0000314"/>
    <property type="project" value="UniProtKB"/>
</dbReference>
<dbReference type="GO" id="GO:0046949">
    <property type="term" value="P:fatty-acyl-CoA biosynthetic process"/>
    <property type="evidence" value="ECO:0000304"/>
    <property type="project" value="Reactome"/>
</dbReference>
<dbReference type="FunFam" id="3.40.50.1820:FF:000037">
    <property type="entry name" value="Lysosomal thioesterase PPT2 homolog"/>
    <property type="match status" value="1"/>
</dbReference>
<dbReference type="Gene3D" id="3.40.50.1820">
    <property type="entry name" value="alpha/beta hydrolase"/>
    <property type="match status" value="1"/>
</dbReference>
<dbReference type="InterPro" id="IPR029058">
    <property type="entry name" value="AB_hydrolase_fold"/>
</dbReference>
<dbReference type="InterPro" id="IPR002472">
    <property type="entry name" value="Palm_thioest"/>
</dbReference>
<dbReference type="PANTHER" id="PTHR11247:SF27">
    <property type="entry name" value="LYSOSOMAL THIOESTERASE PPT2"/>
    <property type="match status" value="1"/>
</dbReference>
<dbReference type="PANTHER" id="PTHR11247">
    <property type="entry name" value="PALMITOYL-PROTEIN THIOESTERASE/DOLICHYLDIPHOSPHATASE 1"/>
    <property type="match status" value="1"/>
</dbReference>
<dbReference type="Pfam" id="PF02089">
    <property type="entry name" value="Palm_thioest"/>
    <property type="match status" value="1"/>
</dbReference>
<dbReference type="PRINTS" id="PR00414">
    <property type="entry name" value="PPTHIESTRASE"/>
</dbReference>
<dbReference type="SUPFAM" id="SSF53474">
    <property type="entry name" value="alpha/beta-Hydrolases"/>
    <property type="match status" value="1"/>
</dbReference>
<proteinExistence type="evidence at protein level"/>
<reference key="1">
    <citation type="journal article" date="1997" name="J. Biol. Chem.">
        <title>Molecular cloning and expression of palmitoyl-protein thioesterase 2 (PPT2), a homolog of lysosomal palmitoyl-protein thioesterase with a distinct substrate specificity.</title>
        <authorList>
            <person name="Soyombo A.A."/>
            <person name="Hofmann S.L."/>
        </authorList>
    </citation>
    <scope>NUCLEOTIDE SEQUENCE [MRNA] (ISOFORMS 1 AND 2)</scope>
    <scope>FUNCTION</scope>
    <scope>CATALYTIC ACTIVITY</scope>
    <scope>TISSUE SPECIFICITY</scope>
    <scope>SUBCELLULAR LOCATION</scope>
    <scope>GLYCOSYLATION</scope>
    <scope>BIOPHYSICOCHEMICAL PROPERTIES</scope>
    <scope>VARIANT TRP-5</scope>
</reference>
<reference key="2">
    <citation type="journal article" date="1999" name="Biochem. J.">
        <title>Characterization of a human MHC class III region gene product with S-thioesterase activity.</title>
        <authorList>
            <person name="Aguado B."/>
            <person name="Campbell R.D."/>
        </authorList>
    </citation>
    <scope>NUCLEOTIDE SEQUENCE [MRNA] (ISOFORM 1)</scope>
    <scope>GLYCOSYLATION</scope>
    <scope>FUNCTION</scope>
    <scope>VARIANT TRP-5</scope>
</reference>
<reference key="3">
    <citation type="journal article" date="2001" name="Genome Res.">
        <title>Towards a catalog of human genes and proteins: sequencing and analysis of 500 novel complete protein coding human cDNAs.</title>
        <authorList>
            <person name="Wiemann S."/>
            <person name="Weil B."/>
            <person name="Wellenreuther R."/>
            <person name="Gassenhuber J."/>
            <person name="Glassl S."/>
            <person name="Ansorge W."/>
            <person name="Boecher M."/>
            <person name="Bloecker H."/>
            <person name="Bauersachs S."/>
            <person name="Blum H."/>
            <person name="Lauber J."/>
            <person name="Duesterhoeft A."/>
            <person name="Beyer A."/>
            <person name="Koehrer K."/>
            <person name="Strack N."/>
            <person name="Mewes H.-W."/>
            <person name="Ottenwaelder B."/>
            <person name="Obermaier B."/>
            <person name="Tampe J."/>
            <person name="Heubner D."/>
            <person name="Wambutt R."/>
            <person name="Korn B."/>
            <person name="Klein M."/>
            <person name="Poustka A."/>
        </authorList>
    </citation>
    <scope>NUCLEOTIDE SEQUENCE [LARGE SCALE MRNA] (ISOFORM 3)</scope>
    <scope>VARIANT TRP-5</scope>
    <source>
        <tissue>Brain</tissue>
    </source>
</reference>
<reference key="4">
    <citation type="submission" date="2004-06" db="EMBL/GenBank/DDBJ databases">
        <title>Cloning of human full open reading frames in Gateway(TM) system entry vector (pDONR201).</title>
        <authorList>
            <person name="Ebert L."/>
            <person name="Schick M."/>
            <person name="Neubert P."/>
            <person name="Schatten R."/>
            <person name="Henze S."/>
            <person name="Korn B."/>
        </authorList>
    </citation>
    <scope>NUCLEOTIDE SEQUENCE [LARGE SCALE MRNA] (ISOFORM 1)</scope>
    <scope>VARIANT TRP-5</scope>
</reference>
<reference key="5">
    <citation type="journal article" date="2004" name="Nat. Genet.">
        <title>Complete sequencing and characterization of 21,243 full-length human cDNAs.</title>
        <authorList>
            <person name="Ota T."/>
            <person name="Suzuki Y."/>
            <person name="Nishikawa T."/>
            <person name="Otsuki T."/>
            <person name="Sugiyama T."/>
            <person name="Irie R."/>
            <person name="Wakamatsu A."/>
            <person name="Hayashi K."/>
            <person name="Sato H."/>
            <person name="Nagai K."/>
            <person name="Kimura K."/>
            <person name="Makita H."/>
            <person name="Sekine M."/>
            <person name="Obayashi M."/>
            <person name="Nishi T."/>
            <person name="Shibahara T."/>
            <person name="Tanaka T."/>
            <person name="Ishii S."/>
            <person name="Yamamoto J."/>
            <person name="Saito K."/>
            <person name="Kawai Y."/>
            <person name="Isono Y."/>
            <person name="Nakamura Y."/>
            <person name="Nagahari K."/>
            <person name="Murakami K."/>
            <person name="Yasuda T."/>
            <person name="Iwayanagi T."/>
            <person name="Wagatsuma M."/>
            <person name="Shiratori A."/>
            <person name="Sudo H."/>
            <person name="Hosoiri T."/>
            <person name="Kaku Y."/>
            <person name="Kodaira H."/>
            <person name="Kondo H."/>
            <person name="Sugawara M."/>
            <person name="Takahashi M."/>
            <person name="Kanda K."/>
            <person name="Yokoi T."/>
            <person name="Furuya T."/>
            <person name="Kikkawa E."/>
            <person name="Omura Y."/>
            <person name="Abe K."/>
            <person name="Kamihara K."/>
            <person name="Katsuta N."/>
            <person name="Sato K."/>
            <person name="Tanikawa M."/>
            <person name="Yamazaki M."/>
            <person name="Ninomiya K."/>
            <person name="Ishibashi T."/>
            <person name="Yamashita H."/>
            <person name="Murakawa K."/>
            <person name="Fujimori K."/>
            <person name="Tanai H."/>
            <person name="Kimata M."/>
            <person name="Watanabe M."/>
            <person name="Hiraoka S."/>
            <person name="Chiba Y."/>
            <person name="Ishida S."/>
            <person name="Ono Y."/>
            <person name="Takiguchi S."/>
            <person name="Watanabe S."/>
            <person name="Yosida M."/>
            <person name="Hotuta T."/>
            <person name="Kusano J."/>
            <person name="Kanehori K."/>
            <person name="Takahashi-Fujii A."/>
            <person name="Hara H."/>
            <person name="Tanase T.-O."/>
            <person name="Nomura Y."/>
            <person name="Togiya S."/>
            <person name="Komai F."/>
            <person name="Hara R."/>
            <person name="Takeuchi K."/>
            <person name="Arita M."/>
            <person name="Imose N."/>
            <person name="Musashino K."/>
            <person name="Yuuki H."/>
            <person name="Oshima A."/>
            <person name="Sasaki N."/>
            <person name="Aotsuka S."/>
            <person name="Yoshikawa Y."/>
            <person name="Matsunawa H."/>
            <person name="Ichihara T."/>
            <person name="Shiohata N."/>
            <person name="Sano S."/>
            <person name="Moriya S."/>
            <person name="Momiyama H."/>
            <person name="Satoh N."/>
            <person name="Takami S."/>
            <person name="Terashima Y."/>
            <person name="Suzuki O."/>
            <person name="Nakagawa S."/>
            <person name="Senoh A."/>
            <person name="Mizoguchi H."/>
            <person name="Goto Y."/>
            <person name="Shimizu F."/>
            <person name="Wakebe H."/>
            <person name="Hishigaki H."/>
            <person name="Watanabe T."/>
            <person name="Sugiyama A."/>
            <person name="Takemoto M."/>
            <person name="Kawakami B."/>
            <person name="Yamazaki M."/>
            <person name="Watanabe K."/>
            <person name="Kumagai A."/>
            <person name="Itakura S."/>
            <person name="Fukuzumi Y."/>
            <person name="Fujimori Y."/>
            <person name="Komiyama M."/>
            <person name="Tashiro H."/>
            <person name="Tanigami A."/>
            <person name="Fujiwara T."/>
            <person name="Ono T."/>
            <person name="Yamada K."/>
            <person name="Fujii Y."/>
            <person name="Ozaki K."/>
            <person name="Hirao M."/>
            <person name="Ohmori Y."/>
            <person name="Kawabata A."/>
            <person name="Hikiji T."/>
            <person name="Kobatake N."/>
            <person name="Inagaki H."/>
            <person name="Ikema Y."/>
            <person name="Okamoto S."/>
            <person name="Okitani R."/>
            <person name="Kawakami T."/>
            <person name="Noguchi S."/>
            <person name="Itoh T."/>
            <person name="Shigeta K."/>
            <person name="Senba T."/>
            <person name="Matsumura K."/>
            <person name="Nakajima Y."/>
            <person name="Mizuno T."/>
            <person name="Morinaga M."/>
            <person name="Sasaki M."/>
            <person name="Togashi T."/>
            <person name="Oyama M."/>
            <person name="Hata H."/>
            <person name="Watanabe M."/>
            <person name="Komatsu T."/>
            <person name="Mizushima-Sugano J."/>
            <person name="Satoh T."/>
            <person name="Shirai Y."/>
            <person name="Takahashi Y."/>
            <person name="Nakagawa K."/>
            <person name="Okumura K."/>
            <person name="Nagase T."/>
            <person name="Nomura N."/>
            <person name="Kikuchi H."/>
            <person name="Masuho Y."/>
            <person name="Yamashita R."/>
            <person name="Nakai K."/>
            <person name="Yada T."/>
            <person name="Nakamura Y."/>
            <person name="Ohara O."/>
            <person name="Isogai T."/>
            <person name="Sugano S."/>
        </authorList>
    </citation>
    <scope>NUCLEOTIDE SEQUENCE [LARGE SCALE MRNA] (ISOFORM 2)</scope>
    <scope>VARIANT TRP-5</scope>
    <source>
        <tissue>Kidney</tissue>
    </source>
</reference>
<reference key="6">
    <citation type="journal article" date="2003" name="Genome Res.">
        <title>Analysis of the gene-dense major histocompatibility complex class III region and its comparison to mouse.</title>
        <authorList>
            <person name="Xie T."/>
            <person name="Rowen L."/>
            <person name="Aguado B."/>
            <person name="Ahearn M.E."/>
            <person name="Madan A."/>
            <person name="Qin S."/>
            <person name="Campbell R.D."/>
            <person name="Hood L."/>
        </authorList>
    </citation>
    <scope>NUCLEOTIDE SEQUENCE [LARGE SCALE GENOMIC DNA]</scope>
    <scope>VARIANTS TRP-5 AND GLU-34</scope>
</reference>
<reference key="7">
    <citation type="journal article" date="2003" name="Nature">
        <title>The DNA sequence and analysis of human chromosome 6.</title>
        <authorList>
            <person name="Mungall A.J."/>
            <person name="Palmer S.A."/>
            <person name="Sims S.K."/>
            <person name="Edwards C.A."/>
            <person name="Ashurst J.L."/>
            <person name="Wilming L."/>
            <person name="Jones M.C."/>
            <person name="Horton R."/>
            <person name="Hunt S.E."/>
            <person name="Scott C.E."/>
            <person name="Gilbert J.G.R."/>
            <person name="Clamp M.E."/>
            <person name="Bethel G."/>
            <person name="Milne S."/>
            <person name="Ainscough R."/>
            <person name="Almeida J.P."/>
            <person name="Ambrose K.D."/>
            <person name="Andrews T.D."/>
            <person name="Ashwell R.I.S."/>
            <person name="Babbage A.K."/>
            <person name="Bagguley C.L."/>
            <person name="Bailey J."/>
            <person name="Banerjee R."/>
            <person name="Barker D.J."/>
            <person name="Barlow K.F."/>
            <person name="Bates K."/>
            <person name="Beare D.M."/>
            <person name="Beasley H."/>
            <person name="Beasley O."/>
            <person name="Bird C.P."/>
            <person name="Blakey S.E."/>
            <person name="Bray-Allen S."/>
            <person name="Brook J."/>
            <person name="Brown A.J."/>
            <person name="Brown J.Y."/>
            <person name="Burford D.C."/>
            <person name="Burrill W."/>
            <person name="Burton J."/>
            <person name="Carder C."/>
            <person name="Carter N.P."/>
            <person name="Chapman J.C."/>
            <person name="Clark S.Y."/>
            <person name="Clark G."/>
            <person name="Clee C.M."/>
            <person name="Clegg S."/>
            <person name="Cobley V."/>
            <person name="Collier R.E."/>
            <person name="Collins J.E."/>
            <person name="Colman L.K."/>
            <person name="Corby N.R."/>
            <person name="Coville G.J."/>
            <person name="Culley K.M."/>
            <person name="Dhami P."/>
            <person name="Davies J."/>
            <person name="Dunn M."/>
            <person name="Earthrowl M.E."/>
            <person name="Ellington A.E."/>
            <person name="Evans K.A."/>
            <person name="Faulkner L."/>
            <person name="Francis M.D."/>
            <person name="Frankish A."/>
            <person name="Frankland J."/>
            <person name="French L."/>
            <person name="Garner P."/>
            <person name="Garnett J."/>
            <person name="Ghori M.J."/>
            <person name="Gilby L.M."/>
            <person name="Gillson C.J."/>
            <person name="Glithero R.J."/>
            <person name="Grafham D.V."/>
            <person name="Grant M."/>
            <person name="Gribble S."/>
            <person name="Griffiths C."/>
            <person name="Griffiths M.N.D."/>
            <person name="Hall R."/>
            <person name="Halls K.S."/>
            <person name="Hammond S."/>
            <person name="Harley J.L."/>
            <person name="Hart E.A."/>
            <person name="Heath P.D."/>
            <person name="Heathcott R."/>
            <person name="Holmes S.J."/>
            <person name="Howden P.J."/>
            <person name="Howe K.L."/>
            <person name="Howell G.R."/>
            <person name="Huckle E."/>
            <person name="Humphray S.J."/>
            <person name="Humphries M.D."/>
            <person name="Hunt A.R."/>
            <person name="Johnson C.M."/>
            <person name="Joy A.A."/>
            <person name="Kay M."/>
            <person name="Keenan S.J."/>
            <person name="Kimberley A.M."/>
            <person name="King A."/>
            <person name="Laird G.K."/>
            <person name="Langford C."/>
            <person name="Lawlor S."/>
            <person name="Leongamornlert D.A."/>
            <person name="Leversha M."/>
            <person name="Lloyd C.R."/>
            <person name="Lloyd D.M."/>
            <person name="Loveland J.E."/>
            <person name="Lovell J."/>
            <person name="Martin S."/>
            <person name="Mashreghi-Mohammadi M."/>
            <person name="Maslen G.L."/>
            <person name="Matthews L."/>
            <person name="McCann O.T."/>
            <person name="McLaren S.J."/>
            <person name="McLay K."/>
            <person name="McMurray A."/>
            <person name="Moore M.J.F."/>
            <person name="Mullikin J.C."/>
            <person name="Niblett D."/>
            <person name="Nickerson T."/>
            <person name="Novik K.L."/>
            <person name="Oliver K."/>
            <person name="Overton-Larty E.K."/>
            <person name="Parker A."/>
            <person name="Patel R."/>
            <person name="Pearce A.V."/>
            <person name="Peck A.I."/>
            <person name="Phillimore B.J.C.T."/>
            <person name="Phillips S."/>
            <person name="Plumb R.W."/>
            <person name="Porter K.M."/>
            <person name="Ramsey Y."/>
            <person name="Ranby S.A."/>
            <person name="Rice C.M."/>
            <person name="Ross M.T."/>
            <person name="Searle S.M."/>
            <person name="Sehra H.K."/>
            <person name="Sheridan E."/>
            <person name="Skuce C.D."/>
            <person name="Smith S."/>
            <person name="Smith M."/>
            <person name="Spraggon L."/>
            <person name="Squares S.L."/>
            <person name="Steward C.A."/>
            <person name="Sycamore N."/>
            <person name="Tamlyn-Hall G."/>
            <person name="Tester J."/>
            <person name="Theaker A.J."/>
            <person name="Thomas D.W."/>
            <person name="Thorpe A."/>
            <person name="Tracey A."/>
            <person name="Tromans A."/>
            <person name="Tubby B."/>
            <person name="Wall M."/>
            <person name="Wallis J.M."/>
            <person name="West A.P."/>
            <person name="White S.S."/>
            <person name="Whitehead S.L."/>
            <person name="Whittaker H."/>
            <person name="Wild A."/>
            <person name="Willey D.J."/>
            <person name="Wilmer T.E."/>
            <person name="Wood J.M."/>
            <person name="Wray P.W."/>
            <person name="Wyatt J.C."/>
            <person name="Young L."/>
            <person name="Younger R.M."/>
            <person name="Bentley D.R."/>
            <person name="Coulson A."/>
            <person name="Durbin R.M."/>
            <person name="Hubbard T."/>
            <person name="Sulston J.E."/>
            <person name="Dunham I."/>
            <person name="Rogers J."/>
            <person name="Beck S."/>
        </authorList>
    </citation>
    <scope>NUCLEOTIDE SEQUENCE [LARGE SCALE GENOMIC DNA]</scope>
    <scope>VARIANTS TRP-5 AND GLU-34</scope>
</reference>
<reference key="8">
    <citation type="submission" date="2005-07" db="EMBL/GenBank/DDBJ databases">
        <authorList>
            <person name="Mural R.J."/>
            <person name="Istrail S."/>
            <person name="Sutton G.G."/>
            <person name="Florea L."/>
            <person name="Halpern A.L."/>
            <person name="Mobarry C.M."/>
            <person name="Lippert R."/>
            <person name="Walenz B."/>
            <person name="Shatkay H."/>
            <person name="Dew I."/>
            <person name="Miller J.R."/>
            <person name="Flanigan M.J."/>
            <person name="Edwards N.J."/>
            <person name="Bolanos R."/>
            <person name="Fasulo D."/>
            <person name="Halldorsson B.V."/>
            <person name="Hannenhalli S."/>
            <person name="Turner R."/>
            <person name="Yooseph S."/>
            <person name="Lu F."/>
            <person name="Nusskern D.R."/>
            <person name="Shue B.C."/>
            <person name="Zheng X.H."/>
            <person name="Zhong F."/>
            <person name="Delcher A.L."/>
            <person name="Huson D.H."/>
            <person name="Kravitz S.A."/>
            <person name="Mouchard L."/>
            <person name="Reinert K."/>
            <person name="Remington K.A."/>
            <person name="Clark A.G."/>
            <person name="Waterman M.S."/>
            <person name="Eichler E.E."/>
            <person name="Adams M.D."/>
            <person name="Hunkapiller M.W."/>
            <person name="Myers E.W."/>
            <person name="Venter J.C."/>
        </authorList>
    </citation>
    <scope>NUCLEOTIDE SEQUENCE [LARGE SCALE GENOMIC DNA]</scope>
    <scope>VARIANT TRP-5</scope>
</reference>
<reference key="9">
    <citation type="journal article" date="2004" name="Genome Res.">
        <title>The status, quality, and expansion of the NIH full-length cDNA project: the Mammalian Gene Collection (MGC).</title>
        <authorList>
            <consortium name="The MGC Project Team"/>
        </authorList>
    </citation>
    <scope>NUCLEOTIDE SEQUENCE [LARGE SCALE MRNA] (ISOFORM 1)</scope>
    <scope>VARIANT TRP-5</scope>
    <source>
        <tissue>Skin</tissue>
    </source>
</reference>
<reference key="10">
    <citation type="journal article" date="2004" name="Genome Biol.">
        <title>An unappreciated role for RNA surveillance.</title>
        <authorList>
            <person name="Hillman R.T."/>
            <person name="Green R.E."/>
            <person name="Brenner S.E."/>
        </authorList>
    </citation>
    <scope>SPLICE ISOFORM(S) THAT ARE POTENTIAL NMD TARGET(S)</scope>
</reference>
<reference key="11">
    <citation type="journal article" date="2011" name="BMC Syst. Biol.">
        <title>Initial characterization of the human central proteome.</title>
        <authorList>
            <person name="Burkard T.R."/>
            <person name="Planyavsky M."/>
            <person name="Kaupe I."/>
            <person name="Breitwieser F.P."/>
            <person name="Buerckstuemmer T."/>
            <person name="Bennett K.L."/>
            <person name="Superti-Furga G."/>
            <person name="Colinge J."/>
        </authorList>
    </citation>
    <scope>IDENTIFICATION BY MASS SPECTROMETRY [LARGE SCALE ANALYSIS]</scope>
</reference>
<reference key="12">
    <citation type="journal article" date="2015" name="Proteomics">
        <title>N-terminome analysis of the human mitochondrial proteome.</title>
        <authorList>
            <person name="Vaca Jacome A.S."/>
            <person name="Rabilloud T."/>
            <person name="Schaeffer-Reiss C."/>
            <person name="Rompais M."/>
            <person name="Ayoub D."/>
            <person name="Lane L."/>
            <person name="Bairoch A."/>
            <person name="Van Dorsselaer A."/>
            <person name="Carapito C."/>
        </authorList>
    </citation>
    <scope>IDENTIFICATION BY MASS SPECTROMETRY [LARGE SCALE ANALYSIS]</scope>
</reference>
<reference key="13">
    <citation type="journal article" date="2003" name="J. Biol. Chem.">
        <title>The crystal structure of palmitoyl protein thioesterase-2 (PPT2) reveals the basis for divergent substrate specificities of the two lysosomal thioesterases, PPT1 and PPT2.</title>
        <authorList>
            <person name="Calero G."/>
            <person name="Gupta P."/>
            <person name="Nonato M.C."/>
            <person name="Tandel S."/>
            <person name="Biehl E.R."/>
            <person name="Hofmann S.L."/>
            <person name="Clardy J."/>
        </authorList>
    </citation>
    <scope>X-RAY CRYSTALLOGRAPHY (2.7 ANGSTROMS)</scope>
    <scope>FUNCTION</scope>
    <scope>CATALYTIC ACTIVITY</scope>
    <scope>BIOPHYSICOCHEMICAL PROPERTIES</scope>
    <scope>MUTAGENESIS OF SER-111; ASP-228; HIS-283 AND HIS-287</scope>
    <scope>GLYCOSYLATION AT ASN-190</scope>
    <scope>DISULFIDE BONDS</scope>
    <scope>ACTIVE SITE</scope>
</reference>
<reference key="14">
    <citation type="journal article" date="1999" name="Genomics">
        <title>Structure of the human palmitoyl-protein thioesterase-2 gene (PPT2) in the major histocompatibility complex on chromosome 6p21.3.</title>
        <authorList>
            <person name="Soyombo A.A."/>
            <person name="Yi W."/>
            <person name="Hofmann S.L."/>
        </authorList>
    </citation>
    <scope>VARIANTS TRP-5 AND GLU-34</scope>
</reference>
<feature type="signal peptide" evidence="1">
    <location>
        <begin position="1"/>
        <end position="27"/>
    </location>
</feature>
<feature type="chain" id="PRO_0000025554" description="Lysosomal thioesterase PPT2">
    <location>
        <begin position="28"/>
        <end position="302"/>
    </location>
</feature>
<feature type="active site" description="Nucleophile" evidence="19">
    <location>
        <position position="111"/>
    </location>
</feature>
<feature type="active site" evidence="19">
    <location>
        <position position="228"/>
    </location>
</feature>
<feature type="active site" evidence="19">
    <location>
        <position position="283"/>
    </location>
</feature>
<feature type="glycosylation site" description="N-linked (GlcNAc...) asparagine" evidence="1">
    <location>
        <position position="60"/>
    </location>
</feature>
<feature type="glycosylation site" description="N-linked (GlcNAc...) asparagine" evidence="5 21">
    <location>
        <position position="190"/>
    </location>
</feature>
<feature type="glycosylation site" description="N-linked (GlcNAc...) asparagine" evidence="1">
    <location>
        <position position="206"/>
    </location>
</feature>
<feature type="glycosylation site" description="N-linked (GlcNAc...) asparagine" evidence="1">
    <location>
        <position position="245"/>
    </location>
</feature>
<feature type="glycosylation site" description="N-linked (GlcNAc...) asparagine" evidence="1">
    <location>
        <position position="289"/>
    </location>
</feature>
<feature type="disulfide bond" evidence="5 21">
    <location>
        <begin position="109"/>
        <end position="117"/>
    </location>
</feature>
<feature type="disulfide bond" evidence="5 21">
    <location>
        <begin position="165"/>
        <end position="176"/>
    </location>
</feature>
<feature type="disulfide bond" evidence="5 21">
    <location>
        <begin position="276"/>
        <end position="296"/>
    </location>
</feature>
<feature type="splice variant" id="VSP_054027" description="In isoform 3." evidence="14">
    <original>M</original>
    <variation>MKSCGSM</variation>
    <location>
        <position position="1"/>
    </location>
</feature>
<feature type="splice variant" id="VSP_005188" description="In isoform 2." evidence="15 16">
    <original>VYLRDSFGLKTLLARGAIVRCPMAGISHTAWHSNRTLYETCIEPW</original>
    <variation>PARPTHQSELLLLRLVCLKPPRRKKPACRVQRQSESWGPGLSCA</variation>
    <location>
        <begin position="256"/>
        <end position="300"/>
    </location>
</feature>
<feature type="sequence variant" id="VAR_027107" description="In dbSNP:rs3134604." evidence="2 3 4 6 7 8 9 10 11 12">
    <original>C</original>
    <variation>W</variation>
    <location>
        <position position="5"/>
    </location>
</feature>
<feature type="sequence variant" id="VAR_027108" description="In dbSNP:rs3096696." evidence="2 6 7">
    <original>A</original>
    <variation>E</variation>
    <location>
        <position position="34"/>
    </location>
</feature>
<feature type="mutagenesis site" description="Abolishes palmitoyl-CoA hydrolase activity." evidence="5">
    <original>S</original>
    <variation>A</variation>
    <location>
        <position position="111"/>
    </location>
</feature>
<feature type="mutagenesis site" description="Abolishes palmitoyl-CoA hydrolase activity." evidence="5">
    <original>D</original>
    <variation>A</variation>
    <location>
        <position position="228"/>
    </location>
</feature>
<feature type="mutagenesis site" description="Abolishes palmitoyl-CoA hydrolase activity." evidence="5">
    <original>H</original>
    <variation>A</variation>
    <location>
        <position position="283"/>
    </location>
</feature>
<feature type="mutagenesis site" description="No effect palmitoyl-CoA hydrolase activity." evidence="5">
    <original>H</original>
    <variation>A</variation>
    <location>
        <position position="287"/>
    </location>
</feature>
<feature type="sequence conflict" description="In Ref. 4; CAG38577." evidence="17" ref="4">
    <original>L</original>
    <variation>P</variation>
    <location>
        <position position="189"/>
    </location>
</feature>
<feature type="strand" evidence="22">
    <location>
        <begin position="39"/>
        <end position="42"/>
    </location>
</feature>
<feature type="helix" evidence="22">
    <location>
        <begin position="49"/>
        <end position="52"/>
    </location>
</feature>
<feature type="helix" evidence="22">
    <location>
        <begin position="53"/>
        <end position="62"/>
    </location>
</feature>
<feature type="strand" evidence="22">
    <location>
        <begin position="68"/>
        <end position="70"/>
    </location>
</feature>
<feature type="helix" evidence="22">
    <location>
        <begin position="77"/>
        <end position="80"/>
    </location>
</feature>
<feature type="helix" evidence="22">
    <location>
        <begin position="83"/>
        <end position="100"/>
    </location>
</feature>
<feature type="strand" evidence="22">
    <location>
        <begin position="105"/>
        <end position="110"/>
    </location>
</feature>
<feature type="helix" evidence="22">
    <location>
        <begin position="112"/>
        <end position="123"/>
    </location>
</feature>
<feature type="strand" evidence="22">
    <location>
        <begin position="129"/>
        <end position="136"/>
    </location>
</feature>
<feature type="helix" evidence="22">
    <location>
        <begin position="147"/>
        <end position="152"/>
    </location>
</feature>
<feature type="helix" evidence="22">
    <location>
        <begin position="158"/>
        <end position="165"/>
    </location>
</feature>
<feature type="helix" evidence="22">
    <location>
        <begin position="170"/>
        <end position="172"/>
    </location>
</feature>
<feature type="helix" evidence="22">
    <location>
        <begin position="175"/>
        <end position="178"/>
    </location>
</feature>
<feature type="helix" evidence="22">
    <location>
        <begin position="185"/>
        <end position="191"/>
    </location>
</feature>
<feature type="helix" evidence="22">
    <location>
        <begin position="195"/>
        <end position="198"/>
    </location>
</feature>
<feature type="helix" evidence="22">
    <location>
        <begin position="207"/>
        <end position="214"/>
    </location>
</feature>
<feature type="strand" evidence="22">
    <location>
        <begin position="218"/>
        <end position="224"/>
    </location>
</feature>
<feature type="strand" evidence="22">
    <location>
        <begin position="229"/>
        <end position="233"/>
    </location>
</feature>
<feature type="helix" evidence="22">
    <location>
        <begin position="234"/>
        <end position="238"/>
    </location>
</feature>
<feature type="helix" evidence="22">
    <location>
        <begin position="251"/>
        <end position="253"/>
    </location>
</feature>
<feature type="helix" evidence="22">
    <location>
        <begin position="255"/>
        <end position="258"/>
    </location>
</feature>
<feature type="turn" evidence="22">
    <location>
        <begin position="259"/>
        <end position="262"/>
    </location>
</feature>
<feature type="helix" evidence="22">
    <location>
        <begin position="264"/>
        <end position="269"/>
    </location>
</feature>
<feature type="strand" evidence="22">
    <location>
        <begin position="273"/>
        <end position="277"/>
    </location>
</feature>
<feature type="turn" evidence="22">
    <location>
        <begin position="283"/>
        <end position="287"/>
    </location>
</feature>
<feature type="helix" evidence="22">
    <location>
        <begin position="290"/>
        <end position="296"/>
    </location>
</feature>
<feature type="helix" evidence="22">
    <location>
        <begin position="298"/>
        <end position="300"/>
    </location>
</feature>
<name>PPT2_HUMAN</name>